<keyword id="KW-0028">Amino-acid biosynthesis</keyword>
<keyword id="KW-0963">Cytoplasm</keyword>
<keyword id="KW-0554">One-carbon metabolism</keyword>
<keyword id="KW-0663">Pyridoxal phosphate</keyword>
<keyword id="KW-1185">Reference proteome</keyword>
<keyword id="KW-0808">Transferase</keyword>
<sequence>MEFLKKVDPDIFGLIEEEDQRQRRNIELIASENFVSDAVMEAAGSCLTNKYAEGYPHKRYYGGCEVVDKVEELAIARARELFGAEHVNVQPHSGSQANQAVYFATVPPGGTILAMDLTHGGHLTHGSPVNMSGKYYNFIHYGVTREEEVIDFDQVRELARKHQPDLIVAGASAYPRIIDFEVFREIADEVGALFMVDMAHIAGLVAAGLHPSPVPVADFVTTTTHKTLRGTRGGLILCKGEHAKKIDKAIFPGLQGGPLLHIIAAKAVTFKEALQDEFKGYQKQIVSNAKTMAAELKNYGFRLVSGGTDNHLMLVDLTNMDITGKDAETALDKVGITVNKNTIPFEKRSPFVTSGIRIGTPAVTTRGMKEKEMKLIAKLIYQTLKNINDEGRLTEIRQEVYRLSERFPKTAE</sequence>
<accession>B8CYJ3</accession>
<reference key="1">
    <citation type="journal article" date="2009" name="PLoS ONE">
        <title>Genome analysis of the anaerobic thermohalophilic bacterium Halothermothrix orenii.</title>
        <authorList>
            <person name="Mavromatis K."/>
            <person name="Ivanova N."/>
            <person name="Anderson I."/>
            <person name="Lykidis A."/>
            <person name="Hooper S.D."/>
            <person name="Sun H."/>
            <person name="Kunin V."/>
            <person name="Lapidus A."/>
            <person name="Hugenholtz P."/>
            <person name="Patel B."/>
            <person name="Kyrpides N.C."/>
        </authorList>
    </citation>
    <scope>NUCLEOTIDE SEQUENCE [LARGE SCALE GENOMIC DNA]</scope>
    <source>
        <strain>H 168 / OCM 544 / DSM 9562</strain>
    </source>
</reference>
<name>GLYA_HALOH</name>
<comment type="function">
    <text evidence="1">Catalyzes the reversible interconversion of serine and glycine with tetrahydrofolate (THF) serving as the one-carbon carrier. This reaction serves as the major source of one-carbon groups required for the biosynthesis of purines, thymidylate, methionine, and other important biomolecules. Also exhibits THF-independent aldolase activity toward beta-hydroxyamino acids, producing glycine and aldehydes, via a retro-aldol mechanism.</text>
</comment>
<comment type="catalytic activity">
    <reaction evidence="1">
        <text>(6R)-5,10-methylene-5,6,7,8-tetrahydrofolate + glycine + H2O = (6S)-5,6,7,8-tetrahydrofolate + L-serine</text>
        <dbReference type="Rhea" id="RHEA:15481"/>
        <dbReference type="ChEBI" id="CHEBI:15377"/>
        <dbReference type="ChEBI" id="CHEBI:15636"/>
        <dbReference type="ChEBI" id="CHEBI:33384"/>
        <dbReference type="ChEBI" id="CHEBI:57305"/>
        <dbReference type="ChEBI" id="CHEBI:57453"/>
        <dbReference type="EC" id="2.1.2.1"/>
    </reaction>
</comment>
<comment type="cofactor">
    <cofactor evidence="1">
        <name>pyridoxal 5'-phosphate</name>
        <dbReference type="ChEBI" id="CHEBI:597326"/>
    </cofactor>
</comment>
<comment type="pathway">
    <text evidence="1">One-carbon metabolism; tetrahydrofolate interconversion.</text>
</comment>
<comment type="pathway">
    <text evidence="1">Amino-acid biosynthesis; glycine biosynthesis; glycine from L-serine: step 1/1.</text>
</comment>
<comment type="subunit">
    <text evidence="1">Homodimer.</text>
</comment>
<comment type="subcellular location">
    <subcellularLocation>
        <location evidence="1">Cytoplasm</location>
    </subcellularLocation>
</comment>
<comment type="similarity">
    <text evidence="1">Belongs to the SHMT family.</text>
</comment>
<feature type="chain" id="PRO_1000117640" description="Serine hydroxymethyltransferase">
    <location>
        <begin position="1"/>
        <end position="412"/>
    </location>
</feature>
<feature type="binding site" evidence="1">
    <location>
        <position position="117"/>
    </location>
    <ligand>
        <name>(6S)-5,6,7,8-tetrahydrofolate</name>
        <dbReference type="ChEBI" id="CHEBI:57453"/>
    </ligand>
</feature>
<feature type="binding site" evidence="1">
    <location>
        <begin position="121"/>
        <end position="123"/>
    </location>
    <ligand>
        <name>(6S)-5,6,7,8-tetrahydrofolate</name>
        <dbReference type="ChEBI" id="CHEBI:57453"/>
    </ligand>
</feature>
<feature type="binding site" evidence="1">
    <location>
        <begin position="349"/>
        <end position="351"/>
    </location>
    <ligand>
        <name>(6S)-5,6,7,8-tetrahydrofolate</name>
        <dbReference type="ChEBI" id="CHEBI:57453"/>
    </ligand>
</feature>
<feature type="site" description="Plays an important role in substrate specificity" evidence="1">
    <location>
        <position position="225"/>
    </location>
</feature>
<feature type="modified residue" description="N6-(pyridoxal phosphate)lysine" evidence="1">
    <location>
        <position position="226"/>
    </location>
</feature>
<organism>
    <name type="scientific">Halothermothrix orenii (strain H 168 / OCM 544 / DSM 9562)</name>
    <dbReference type="NCBI Taxonomy" id="373903"/>
    <lineage>
        <taxon>Bacteria</taxon>
        <taxon>Bacillati</taxon>
        <taxon>Bacillota</taxon>
        <taxon>Clostridia</taxon>
        <taxon>Halanaerobiales</taxon>
        <taxon>Halothermotrichaceae</taxon>
        <taxon>Halothermothrix</taxon>
    </lineage>
</organism>
<proteinExistence type="inferred from homology"/>
<evidence type="ECO:0000255" key="1">
    <source>
        <dbReference type="HAMAP-Rule" id="MF_00051"/>
    </source>
</evidence>
<dbReference type="EC" id="2.1.2.1" evidence="1"/>
<dbReference type="EMBL" id="CP001098">
    <property type="protein sequence ID" value="ACL70362.1"/>
    <property type="molecule type" value="Genomic_DNA"/>
</dbReference>
<dbReference type="RefSeq" id="WP_012636545.1">
    <property type="nucleotide sequence ID" value="NC_011899.1"/>
</dbReference>
<dbReference type="SMR" id="B8CYJ3"/>
<dbReference type="STRING" id="373903.Hore_16130"/>
<dbReference type="KEGG" id="hor:Hore_16130"/>
<dbReference type="eggNOG" id="COG0112">
    <property type="taxonomic scope" value="Bacteria"/>
</dbReference>
<dbReference type="HOGENOM" id="CLU_022477_2_1_9"/>
<dbReference type="OrthoDB" id="9803846at2"/>
<dbReference type="UniPathway" id="UPA00193"/>
<dbReference type="UniPathway" id="UPA00288">
    <property type="reaction ID" value="UER01023"/>
</dbReference>
<dbReference type="Proteomes" id="UP000000719">
    <property type="component" value="Chromosome"/>
</dbReference>
<dbReference type="GO" id="GO:0005829">
    <property type="term" value="C:cytosol"/>
    <property type="evidence" value="ECO:0007669"/>
    <property type="project" value="TreeGrafter"/>
</dbReference>
<dbReference type="GO" id="GO:0004372">
    <property type="term" value="F:glycine hydroxymethyltransferase activity"/>
    <property type="evidence" value="ECO:0007669"/>
    <property type="project" value="UniProtKB-UniRule"/>
</dbReference>
<dbReference type="GO" id="GO:0030170">
    <property type="term" value="F:pyridoxal phosphate binding"/>
    <property type="evidence" value="ECO:0007669"/>
    <property type="project" value="UniProtKB-UniRule"/>
</dbReference>
<dbReference type="GO" id="GO:0019264">
    <property type="term" value="P:glycine biosynthetic process from serine"/>
    <property type="evidence" value="ECO:0007669"/>
    <property type="project" value="UniProtKB-UniRule"/>
</dbReference>
<dbReference type="GO" id="GO:0035999">
    <property type="term" value="P:tetrahydrofolate interconversion"/>
    <property type="evidence" value="ECO:0007669"/>
    <property type="project" value="UniProtKB-UniRule"/>
</dbReference>
<dbReference type="CDD" id="cd00378">
    <property type="entry name" value="SHMT"/>
    <property type="match status" value="1"/>
</dbReference>
<dbReference type="FunFam" id="3.40.640.10:FF:000001">
    <property type="entry name" value="Serine hydroxymethyltransferase"/>
    <property type="match status" value="1"/>
</dbReference>
<dbReference type="FunFam" id="3.90.1150.10:FF:000003">
    <property type="entry name" value="Serine hydroxymethyltransferase"/>
    <property type="match status" value="1"/>
</dbReference>
<dbReference type="Gene3D" id="3.90.1150.10">
    <property type="entry name" value="Aspartate Aminotransferase, domain 1"/>
    <property type="match status" value="1"/>
</dbReference>
<dbReference type="Gene3D" id="3.40.640.10">
    <property type="entry name" value="Type I PLP-dependent aspartate aminotransferase-like (Major domain)"/>
    <property type="match status" value="1"/>
</dbReference>
<dbReference type="HAMAP" id="MF_00051">
    <property type="entry name" value="SHMT"/>
    <property type="match status" value="1"/>
</dbReference>
<dbReference type="InterPro" id="IPR015424">
    <property type="entry name" value="PyrdxlP-dep_Trfase"/>
</dbReference>
<dbReference type="InterPro" id="IPR015421">
    <property type="entry name" value="PyrdxlP-dep_Trfase_major"/>
</dbReference>
<dbReference type="InterPro" id="IPR015422">
    <property type="entry name" value="PyrdxlP-dep_Trfase_small"/>
</dbReference>
<dbReference type="InterPro" id="IPR001085">
    <property type="entry name" value="Ser_HO-MeTrfase"/>
</dbReference>
<dbReference type="InterPro" id="IPR049943">
    <property type="entry name" value="Ser_HO-MeTrfase-like"/>
</dbReference>
<dbReference type="InterPro" id="IPR039429">
    <property type="entry name" value="SHMT-like_dom"/>
</dbReference>
<dbReference type="NCBIfam" id="NF000586">
    <property type="entry name" value="PRK00011.1"/>
    <property type="match status" value="1"/>
</dbReference>
<dbReference type="PANTHER" id="PTHR11680">
    <property type="entry name" value="SERINE HYDROXYMETHYLTRANSFERASE"/>
    <property type="match status" value="1"/>
</dbReference>
<dbReference type="PANTHER" id="PTHR11680:SF35">
    <property type="entry name" value="SERINE HYDROXYMETHYLTRANSFERASE 1"/>
    <property type="match status" value="1"/>
</dbReference>
<dbReference type="Pfam" id="PF00464">
    <property type="entry name" value="SHMT"/>
    <property type="match status" value="1"/>
</dbReference>
<dbReference type="PIRSF" id="PIRSF000412">
    <property type="entry name" value="SHMT"/>
    <property type="match status" value="1"/>
</dbReference>
<dbReference type="SUPFAM" id="SSF53383">
    <property type="entry name" value="PLP-dependent transferases"/>
    <property type="match status" value="1"/>
</dbReference>
<gene>
    <name evidence="1" type="primary">glyA</name>
    <name type="ordered locus">Hore_16130</name>
</gene>
<protein>
    <recommendedName>
        <fullName evidence="1">Serine hydroxymethyltransferase</fullName>
        <shortName evidence="1">SHMT</shortName>
        <shortName evidence="1">Serine methylase</shortName>
        <ecNumber evidence="1">2.1.2.1</ecNumber>
    </recommendedName>
</protein>